<accession>A4JF19</accession>
<gene>
    <name evidence="1" type="primary">ispF</name>
    <name type="ordered locus">Bcep1808_1869</name>
</gene>
<dbReference type="EC" id="4.6.1.12" evidence="1"/>
<dbReference type="EMBL" id="CP000614">
    <property type="protein sequence ID" value="ABO54872.1"/>
    <property type="molecule type" value="Genomic_DNA"/>
</dbReference>
<dbReference type="SMR" id="A4JF19"/>
<dbReference type="KEGG" id="bvi:Bcep1808_1869"/>
<dbReference type="eggNOG" id="COG0245">
    <property type="taxonomic scope" value="Bacteria"/>
</dbReference>
<dbReference type="HOGENOM" id="CLU_084630_2_0_4"/>
<dbReference type="UniPathway" id="UPA00056">
    <property type="reaction ID" value="UER00095"/>
</dbReference>
<dbReference type="Proteomes" id="UP000002287">
    <property type="component" value="Chromosome 1"/>
</dbReference>
<dbReference type="GO" id="GO:0008685">
    <property type="term" value="F:2-C-methyl-D-erythritol 2,4-cyclodiphosphate synthase activity"/>
    <property type="evidence" value="ECO:0007669"/>
    <property type="project" value="UniProtKB-UniRule"/>
</dbReference>
<dbReference type="GO" id="GO:0046872">
    <property type="term" value="F:metal ion binding"/>
    <property type="evidence" value="ECO:0007669"/>
    <property type="project" value="UniProtKB-KW"/>
</dbReference>
<dbReference type="GO" id="GO:0019288">
    <property type="term" value="P:isopentenyl diphosphate biosynthetic process, methylerythritol 4-phosphate pathway"/>
    <property type="evidence" value="ECO:0007669"/>
    <property type="project" value="UniProtKB-UniRule"/>
</dbReference>
<dbReference type="GO" id="GO:0016114">
    <property type="term" value="P:terpenoid biosynthetic process"/>
    <property type="evidence" value="ECO:0007669"/>
    <property type="project" value="InterPro"/>
</dbReference>
<dbReference type="CDD" id="cd00554">
    <property type="entry name" value="MECDP_synthase"/>
    <property type="match status" value="1"/>
</dbReference>
<dbReference type="FunFam" id="3.30.1330.50:FF:000001">
    <property type="entry name" value="2-C-methyl-D-erythritol 2,4-cyclodiphosphate synthase"/>
    <property type="match status" value="1"/>
</dbReference>
<dbReference type="Gene3D" id="3.30.1330.50">
    <property type="entry name" value="2-C-methyl-D-erythritol 2,4-cyclodiphosphate synthase"/>
    <property type="match status" value="1"/>
</dbReference>
<dbReference type="HAMAP" id="MF_00107">
    <property type="entry name" value="IspF"/>
    <property type="match status" value="1"/>
</dbReference>
<dbReference type="InterPro" id="IPR003526">
    <property type="entry name" value="MECDP_synthase"/>
</dbReference>
<dbReference type="InterPro" id="IPR020555">
    <property type="entry name" value="MECDP_synthase_CS"/>
</dbReference>
<dbReference type="InterPro" id="IPR036571">
    <property type="entry name" value="MECDP_synthase_sf"/>
</dbReference>
<dbReference type="NCBIfam" id="TIGR00151">
    <property type="entry name" value="ispF"/>
    <property type="match status" value="1"/>
</dbReference>
<dbReference type="PANTHER" id="PTHR43181">
    <property type="entry name" value="2-C-METHYL-D-ERYTHRITOL 2,4-CYCLODIPHOSPHATE SYNTHASE, CHLOROPLASTIC"/>
    <property type="match status" value="1"/>
</dbReference>
<dbReference type="PANTHER" id="PTHR43181:SF1">
    <property type="entry name" value="2-C-METHYL-D-ERYTHRITOL 2,4-CYCLODIPHOSPHATE SYNTHASE, CHLOROPLASTIC"/>
    <property type="match status" value="1"/>
</dbReference>
<dbReference type="Pfam" id="PF02542">
    <property type="entry name" value="YgbB"/>
    <property type="match status" value="1"/>
</dbReference>
<dbReference type="SUPFAM" id="SSF69765">
    <property type="entry name" value="IpsF-like"/>
    <property type="match status" value="1"/>
</dbReference>
<dbReference type="PROSITE" id="PS01350">
    <property type="entry name" value="ISPF"/>
    <property type="match status" value="1"/>
</dbReference>
<evidence type="ECO:0000255" key="1">
    <source>
        <dbReference type="HAMAP-Rule" id="MF_00107"/>
    </source>
</evidence>
<organism>
    <name type="scientific">Burkholderia vietnamiensis (strain G4 / LMG 22486)</name>
    <name type="common">Burkholderia cepacia (strain R1808)</name>
    <dbReference type="NCBI Taxonomy" id="269482"/>
    <lineage>
        <taxon>Bacteria</taxon>
        <taxon>Pseudomonadati</taxon>
        <taxon>Pseudomonadota</taxon>
        <taxon>Betaproteobacteria</taxon>
        <taxon>Burkholderiales</taxon>
        <taxon>Burkholderiaceae</taxon>
        <taxon>Burkholderia</taxon>
        <taxon>Burkholderia cepacia complex</taxon>
    </lineage>
</organism>
<proteinExistence type="inferred from homology"/>
<protein>
    <recommendedName>
        <fullName evidence="1">2-C-methyl-D-erythritol 2,4-cyclodiphosphate synthase</fullName>
        <shortName evidence="1">MECDP-synthase</shortName>
        <shortName evidence="1">MECPP-synthase</shortName>
        <shortName evidence="1">MECPS</shortName>
        <ecNumber evidence="1">4.6.1.12</ecNumber>
    </recommendedName>
</protein>
<reference key="1">
    <citation type="submission" date="2007-03" db="EMBL/GenBank/DDBJ databases">
        <title>Complete sequence of chromosome 1 of Burkholderia vietnamiensis G4.</title>
        <authorList>
            <consortium name="US DOE Joint Genome Institute"/>
            <person name="Copeland A."/>
            <person name="Lucas S."/>
            <person name="Lapidus A."/>
            <person name="Barry K."/>
            <person name="Detter J.C."/>
            <person name="Glavina del Rio T."/>
            <person name="Hammon N."/>
            <person name="Israni S."/>
            <person name="Dalin E."/>
            <person name="Tice H."/>
            <person name="Pitluck S."/>
            <person name="Chain P."/>
            <person name="Malfatti S."/>
            <person name="Shin M."/>
            <person name="Vergez L."/>
            <person name="Schmutz J."/>
            <person name="Larimer F."/>
            <person name="Land M."/>
            <person name="Hauser L."/>
            <person name="Kyrpides N."/>
            <person name="Tiedje J."/>
            <person name="Richardson P."/>
        </authorList>
    </citation>
    <scope>NUCLEOTIDE SEQUENCE [LARGE SCALE GENOMIC DNA]</scope>
    <source>
        <strain>G4 / LMG 22486</strain>
    </source>
</reference>
<keyword id="KW-0414">Isoprene biosynthesis</keyword>
<keyword id="KW-0456">Lyase</keyword>
<keyword id="KW-0479">Metal-binding</keyword>
<feature type="chain" id="PRO_1000022817" description="2-C-methyl-D-erythritol 2,4-cyclodiphosphate synthase">
    <location>
        <begin position="1"/>
        <end position="158"/>
    </location>
</feature>
<feature type="binding site" evidence="1">
    <location>
        <begin position="10"/>
        <end position="12"/>
    </location>
    <ligand>
        <name>4-CDP-2-C-methyl-D-erythritol 2-phosphate</name>
        <dbReference type="ChEBI" id="CHEBI:57919"/>
    </ligand>
</feature>
<feature type="binding site" evidence="1">
    <location>
        <position position="10"/>
    </location>
    <ligand>
        <name>a divalent metal cation</name>
        <dbReference type="ChEBI" id="CHEBI:60240"/>
    </ligand>
</feature>
<feature type="binding site" evidence="1">
    <location>
        <position position="12"/>
    </location>
    <ligand>
        <name>a divalent metal cation</name>
        <dbReference type="ChEBI" id="CHEBI:60240"/>
    </ligand>
</feature>
<feature type="binding site" evidence="1">
    <location>
        <begin position="36"/>
        <end position="37"/>
    </location>
    <ligand>
        <name>4-CDP-2-C-methyl-D-erythritol 2-phosphate</name>
        <dbReference type="ChEBI" id="CHEBI:57919"/>
    </ligand>
</feature>
<feature type="binding site" evidence="1">
    <location>
        <position position="44"/>
    </location>
    <ligand>
        <name>a divalent metal cation</name>
        <dbReference type="ChEBI" id="CHEBI:60240"/>
    </ligand>
</feature>
<feature type="binding site" evidence="1">
    <location>
        <begin position="58"/>
        <end position="60"/>
    </location>
    <ligand>
        <name>4-CDP-2-C-methyl-D-erythritol 2-phosphate</name>
        <dbReference type="ChEBI" id="CHEBI:57919"/>
    </ligand>
</feature>
<feature type="binding site" evidence="1">
    <location>
        <begin position="63"/>
        <end position="67"/>
    </location>
    <ligand>
        <name>4-CDP-2-C-methyl-D-erythritol 2-phosphate</name>
        <dbReference type="ChEBI" id="CHEBI:57919"/>
    </ligand>
</feature>
<feature type="binding site" evidence="1">
    <location>
        <position position="144"/>
    </location>
    <ligand>
        <name>4-CDP-2-C-methyl-D-erythritol 2-phosphate</name>
        <dbReference type="ChEBI" id="CHEBI:57919"/>
    </ligand>
</feature>
<feature type="site" description="Transition state stabilizer" evidence="1">
    <location>
        <position position="36"/>
    </location>
</feature>
<feature type="site" description="Transition state stabilizer" evidence="1">
    <location>
        <position position="135"/>
    </location>
</feature>
<comment type="function">
    <text evidence="1">Involved in the biosynthesis of isopentenyl diphosphate (IPP) and dimethylallyl diphosphate (DMAPP), two major building blocks of isoprenoid compounds. Catalyzes the conversion of 4-diphosphocytidyl-2-C-methyl-D-erythritol 2-phosphate (CDP-ME2P) to 2-C-methyl-D-erythritol 2,4-cyclodiphosphate (ME-CPP) with a corresponding release of cytidine 5-monophosphate (CMP).</text>
</comment>
<comment type="catalytic activity">
    <reaction evidence="1">
        <text>4-CDP-2-C-methyl-D-erythritol 2-phosphate = 2-C-methyl-D-erythritol 2,4-cyclic diphosphate + CMP</text>
        <dbReference type="Rhea" id="RHEA:23864"/>
        <dbReference type="ChEBI" id="CHEBI:57919"/>
        <dbReference type="ChEBI" id="CHEBI:58483"/>
        <dbReference type="ChEBI" id="CHEBI:60377"/>
        <dbReference type="EC" id="4.6.1.12"/>
    </reaction>
</comment>
<comment type="cofactor">
    <cofactor evidence="1">
        <name>a divalent metal cation</name>
        <dbReference type="ChEBI" id="CHEBI:60240"/>
    </cofactor>
    <text evidence="1">Binds 1 divalent metal cation per subunit.</text>
</comment>
<comment type="pathway">
    <text evidence="1">Isoprenoid biosynthesis; isopentenyl diphosphate biosynthesis via DXP pathway; isopentenyl diphosphate from 1-deoxy-D-xylulose 5-phosphate: step 4/6.</text>
</comment>
<comment type="subunit">
    <text evidence="1">Homotrimer.</text>
</comment>
<comment type="similarity">
    <text evidence="1">Belongs to the IspF family.</text>
</comment>
<name>ISPF_BURVG</name>
<sequence length="158" mass="16635">MDFRIGQGYDVHQLVPGRPLIIGGVTIPYERGLLGHSDADVLLHAITDALFGAAALGDIGRHFSDTDAAFKGADSRVLLRECAARVKAAGFTIQNVDSTVIAQAPKLAPHIDGMRANIAADLGLPLERVNVKAKTNEKLGYLGRGDGIEAQAAALLVK</sequence>